<accession>Q0BJL8</accession>
<gene>
    <name evidence="1" type="primary">atpH</name>
    <name type="ordered locus">Bamb_0094</name>
</gene>
<organism>
    <name type="scientific">Burkholderia ambifaria (strain ATCC BAA-244 / DSM 16087 / CCUG 44356 / LMG 19182 / AMMD)</name>
    <name type="common">Burkholderia cepacia (strain AMMD)</name>
    <dbReference type="NCBI Taxonomy" id="339670"/>
    <lineage>
        <taxon>Bacteria</taxon>
        <taxon>Pseudomonadati</taxon>
        <taxon>Pseudomonadota</taxon>
        <taxon>Betaproteobacteria</taxon>
        <taxon>Burkholderiales</taxon>
        <taxon>Burkholderiaceae</taxon>
        <taxon>Burkholderia</taxon>
        <taxon>Burkholderia cepacia complex</taxon>
    </lineage>
</organism>
<sequence>MAELATIARPYAEALFRVAEGGDIAAWSTLVQELAQVARLPEVLSVASSPKVTRTQVVELLLAAVKSPVAAGAEAKNFVQMLVDNHRIALLPEIAEQFEALKNEREGAADAEIVSAFPLNGADLESLVSGLERKFKRKLKPTVEVDSSLIGGVRVTVGDEVLDTSVRARLASMQAALTA</sequence>
<feature type="chain" id="PRO_0000370915" description="ATP synthase subunit delta">
    <location>
        <begin position="1"/>
        <end position="179"/>
    </location>
</feature>
<comment type="function">
    <text evidence="1">F(1)F(0) ATP synthase produces ATP from ADP in the presence of a proton or sodium gradient. F-type ATPases consist of two structural domains, F(1) containing the extramembraneous catalytic core and F(0) containing the membrane proton channel, linked together by a central stalk and a peripheral stalk. During catalysis, ATP synthesis in the catalytic domain of F(1) is coupled via a rotary mechanism of the central stalk subunits to proton translocation.</text>
</comment>
<comment type="function">
    <text evidence="1">This protein is part of the stalk that links CF(0) to CF(1). It either transmits conformational changes from CF(0) to CF(1) or is implicated in proton conduction.</text>
</comment>
<comment type="subunit">
    <text evidence="1">F-type ATPases have 2 components, F(1) - the catalytic core - and F(0) - the membrane proton channel. F(1) has five subunits: alpha(3), beta(3), gamma(1), delta(1), epsilon(1). F(0) has three main subunits: a(1), b(2) and c(10-14). The alpha and beta chains form an alternating ring which encloses part of the gamma chain. F(1) is attached to F(0) by a central stalk formed by the gamma and epsilon chains, while a peripheral stalk is formed by the delta and b chains.</text>
</comment>
<comment type="subcellular location">
    <subcellularLocation>
        <location evidence="1">Cell inner membrane</location>
        <topology evidence="1">Peripheral membrane protein</topology>
    </subcellularLocation>
</comment>
<comment type="similarity">
    <text evidence="1">Belongs to the ATPase delta chain family.</text>
</comment>
<reference key="1">
    <citation type="submission" date="2006-08" db="EMBL/GenBank/DDBJ databases">
        <title>Complete sequence of chromosome 1 of Burkholderia cepacia AMMD.</title>
        <authorList>
            <person name="Copeland A."/>
            <person name="Lucas S."/>
            <person name="Lapidus A."/>
            <person name="Barry K."/>
            <person name="Detter J.C."/>
            <person name="Glavina del Rio T."/>
            <person name="Hammon N."/>
            <person name="Israni S."/>
            <person name="Pitluck S."/>
            <person name="Bruce D."/>
            <person name="Chain P."/>
            <person name="Malfatti S."/>
            <person name="Shin M."/>
            <person name="Vergez L."/>
            <person name="Schmutz J."/>
            <person name="Larimer F."/>
            <person name="Land M."/>
            <person name="Hauser L."/>
            <person name="Kyrpides N."/>
            <person name="Kim E."/>
            <person name="Parke J."/>
            <person name="Coenye T."/>
            <person name="Konstantinidis K."/>
            <person name="Ramette A."/>
            <person name="Tiedje J."/>
            <person name="Richardson P."/>
        </authorList>
    </citation>
    <scope>NUCLEOTIDE SEQUENCE [LARGE SCALE GENOMIC DNA]</scope>
    <source>
        <strain>ATCC BAA-244 / DSM 16087 / CCUG 44356 / LMG 19182 / AMMD</strain>
    </source>
</reference>
<protein>
    <recommendedName>
        <fullName evidence="1">ATP synthase subunit delta</fullName>
    </recommendedName>
    <alternativeName>
        <fullName evidence="1">ATP synthase F(1) sector subunit delta</fullName>
    </alternativeName>
    <alternativeName>
        <fullName evidence="1">F-type ATPase subunit delta</fullName>
        <shortName evidence="1">F-ATPase subunit delta</shortName>
    </alternativeName>
</protein>
<dbReference type="EMBL" id="CP000440">
    <property type="protein sequence ID" value="ABI85655.1"/>
    <property type="molecule type" value="Genomic_DNA"/>
</dbReference>
<dbReference type="RefSeq" id="WP_006756468.1">
    <property type="nucleotide sequence ID" value="NZ_CP009798.1"/>
</dbReference>
<dbReference type="SMR" id="Q0BJL8"/>
<dbReference type="DNASU" id="4311222"/>
<dbReference type="KEGG" id="bam:Bamb_0094"/>
<dbReference type="PATRIC" id="fig|339670.21.peg.1539"/>
<dbReference type="eggNOG" id="COG0712">
    <property type="taxonomic scope" value="Bacteria"/>
</dbReference>
<dbReference type="Proteomes" id="UP000000662">
    <property type="component" value="Chromosome 1"/>
</dbReference>
<dbReference type="GO" id="GO:0005886">
    <property type="term" value="C:plasma membrane"/>
    <property type="evidence" value="ECO:0007669"/>
    <property type="project" value="UniProtKB-SubCell"/>
</dbReference>
<dbReference type="GO" id="GO:0045259">
    <property type="term" value="C:proton-transporting ATP synthase complex"/>
    <property type="evidence" value="ECO:0007669"/>
    <property type="project" value="UniProtKB-KW"/>
</dbReference>
<dbReference type="GO" id="GO:0046933">
    <property type="term" value="F:proton-transporting ATP synthase activity, rotational mechanism"/>
    <property type="evidence" value="ECO:0007669"/>
    <property type="project" value="UniProtKB-UniRule"/>
</dbReference>
<dbReference type="Gene3D" id="1.10.520.20">
    <property type="entry name" value="N-terminal domain of the delta subunit of the F1F0-ATP synthase"/>
    <property type="match status" value="1"/>
</dbReference>
<dbReference type="HAMAP" id="MF_01416">
    <property type="entry name" value="ATP_synth_delta_bact"/>
    <property type="match status" value="1"/>
</dbReference>
<dbReference type="InterPro" id="IPR026015">
    <property type="entry name" value="ATP_synth_OSCP/delta_N_sf"/>
</dbReference>
<dbReference type="InterPro" id="IPR000711">
    <property type="entry name" value="ATPase_OSCP/dsu"/>
</dbReference>
<dbReference type="NCBIfam" id="TIGR01145">
    <property type="entry name" value="ATP_synt_delta"/>
    <property type="match status" value="1"/>
</dbReference>
<dbReference type="NCBIfam" id="NF004402">
    <property type="entry name" value="PRK05758.2-2"/>
    <property type="match status" value="1"/>
</dbReference>
<dbReference type="PANTHER" id="PTHR11910">
    <property type="entry name" value="ATP SYNTHASE DELTA CHAIN"/>
    <property type="match status" value="1"/>
</dbReference>
<dbReference type="Pfam" id="PF00213">
    <property type="entry name" value="OSCP"/>
    <property type="match status" value="1"/>
</dbReference>
<dbReference type="PRINTS" id="PR00125">
    <property type="entry name" value="ATPASEDELTA"/>
</dbReference>
<dbReference type="SUPFAM" id="SSF47928">
    <property type="entry name" value="N-terminal domain of the delta subunit of the F1F0-ATP synthase"/>
    <property type="match status" value="1"/>
</dbReference>
<keyword id="KW-0066">ATP synthesis</keyword>
<keyword id="KW-0997">Cell inner membrane</keyword>
<keyword id="KW-1003">Cell membrane</keyword>
<keyword id="KW-0139">CF(1)</keyword>
<keyword id="KW-0375">Hydrogen ion transport</keyword>
<keyword id="KW-0406">Ion transport</keyword>
<keyword id="KW-0472">Membrane</keyword>
<keyword id="KW-0813">Transport</keyword>
<proteinExistence type="inferred from homology"/>
<name>ATPD_BURCM</name>
<evidence type="ECO:0000255" key="1">
    <source>
        <dbReference type="HAMAP-Rule" id="MF_01416"/>
    </source>
</evidence>